<name>HIS6_RUEPO</name>
<organism>
    <name type="scientific">Ruegeria pomeroyi (strain ATCC 700808 / DSM 15171 / DSS-3)</name>
    <name type="common">Silicibacter pomeroyi</name>
    <dbReference type="NCBI Taxonomy" id="246200"/>
    <lineage>
        <taxon>Bacteria</taxon>
        <taxon>Pseudomonadati</taxon>
        <taxon>Pseudomonadota</taxon>
        <taxon>Alphaproteobacteria</taxon>
        <taxon>Rhodobacterales</taxon>
        <taxon>Roseobacteraceae</taxon>
        <taxon>Ruegeria</taxon>
    </lineage>
</organism>
<sequence length="253" mass="26509">MLKTRIIPCLDVADGRVVKGVNFVGLRDAGDPVDAARAYDAAGADEICFLDIHATHENRGTMFDVVSRTAEQCFVPLTVGGGVRTHADVRALLLAGADKVSFNSAAVANPDVIAEAADRFGSQCIVCAIDAKTVEPGRWEIFTHGGRKPTGIDAVEFARLVTAKGAGEILLTSMDRDGTKSGFNLPLTRAIADAVDVPVIASGGVGTLDHLVEGVTEGHASAVLAASIFHFGEYTIREAKEHMAAAGIPMRLT</sequence>
<comment type="function">
    <text evidence="1">IGPS catalyzes the conversion of PRFAR and glutamine to IGP, AICAR and glutamate. The HisF subunit catalyzes the cyclization activity that produces IGP and AICAR from PRFAR using the ammonia provided by the HisH subunit.</text>
</comment>
<comment type="catalytic activity">
    <reaction evidence="1">
        <text>5-[(5-phospho-1-deoxy-D-ribulos-1-ylimino)methylamino]-1-(5-phospho-beta-D-ribosyl)imidazole-4-carboxamide + L-glutamine = D-erythro-1-(imidazol-4-yl)glycerol 3-phosphate + 5-amino-1-(5-phospho-beta-D-ribosyl)imidazole-4-carboxamide + L-glutamate + H(+)</text>
        <dbReference type="Rhea" id="RHEA:24793"/>
        <dbReference type="ChEBI" id="CHEBI:15378"/>
        <dbReference type="ChEBI" id="CHEBI:29985"/>
        <dbReference type="ChEBI" id="CHEBI:58278"/>
        <dbReference type="ChEBI" id="CHEBI:58359"/>
        <dbReference type="ChEBI" id="CHEBI:58475"/>
        <dbReference type="ChEBI" id="CHEBI:58525"/>
        <dbReference type="EC" id="4.3.2.10"/>
    </reaction>
</comment>
<comment type="pathway">
    <text evidence="1">Amino-acid biosynthesis; L-histidine biosynthesis; L-histidine from 5-phospho-alpha-D-ribose 1-diphosphate: step 5/9.</text>
</comment>
<comment type="subunit">
    <text evidence="1">Heterodimer of HisH and HisF.</text>
</comment>
<comment type="subcellular location">
    <subcellularLocation>
        <location evidence="1">Cytoplasm</location>
    </subcellularLocation>
</comment>
<comment type="similarity">
    <text evidence="1">Belongs to the HisA/HisF family.</text>
</comment>
<feature type="chain" id="PRO_0000142231" description="Imidazole glycerol phosphate synthase subunit HisF">
    <location>
        <begin position="1"/>
        <end position="253"/>
    </location>
</feature>
<feature type="active site" evidence="1">
    <location>
        <position position="11"/>
    </location>
</feature>
<feature type="active site" evidence="1">
    <location>
        <position position="130"/>
    </location>
</feature>
<accession>Q5LU99</accession>
<gene>
    <name evidence="1" type="primary">hisF</name>
    <name type="ordered locus">SPO1156</name>
</gene>
<dbReference type="EC" id="4.3.2.10" evidence="1"/>
<dbReference type="EMBL" id="CP000031">
    <property type="protein sequence ID" value="AAV94455.1"/>
    <property type="molecule type" value="Genomic_DNA"/>
</dbReference>
<dbReference type="RefSeq" id="WP_011046902.1">
    <property type="nucleotide sequence ID" value="NC_003911.12"/>
</dbReference>
<dbReference type="SMR" id="Q5LU99"/>
<dbReference type="STRING" id="246200.SPO1156"/>
<dbReference type="PaxDb" id="246200-SPO1156"/>
<dbReference type="KEGG" id="sil:SPO1156"/>
<dbReference type="eggNOG" id="COG0107">
    <property type="taxonomic scope" value="Bacteria"/>
</dbReference>
<dbReference type="HOGENOM" id="CLU_048577_4_0_5"/>
<dbReference type="OrthoDB" id="9781903at2"/>
<dbReference type="UniPathway" id="UPA00031">
    <property type="reaction ID" value="UER00010"/>
</dbReference>
<dbReference type="Proteomes" id="UP000001023">
    <property type="component" value="Chromosome"/>
</dbReference>
<dbReference type="GO" id="GO:0005737">
    <property type="term" value="C:cytoplasm"/>
    <property type="evidence" value="ECO:0007669"/>
    <property type="project" value="UniProtKB-SubCell"/>
</dbReference>
<dbReference type="GO" id="GO:0000107">
    <property type="term" value="F:imidazoleglycerol-phosphate synthase activity"/>
    <property type="evidence" value="ECO:0007669"/>
    <property type="project" value="UniProtKB-UniRule"/>
</dbReference>
<dbReference type="GO" id="GO:0016829">
    <property type="term" value="F:lyase activity"/>
    <property type="evidence" value="ECO:0007669"/>
    <property type="project" value="UniProtKB-KW"/>
</dbReference>
<dbReference type="GO" id="GO:0000105">
    <property type="term" value="P:L-histidine biosynthetic process"/>
    <property type="evidence" value="ECO:0007669"/>
    <property type="project" value="UniProtKB-UniRule"/>
</dbReference>
<dbReference type="CDD" id="cd04731">
    <property type="entry name" value="HisF"/>
    <property type="match status" value="1"/>
</dbReference>
<dbReference type="FunFam" id="3.20.20.70:FF:000006">
    <property type="entry name" value="Imidazole glycerol phosphate synthase subunit HisF"/>
    <property type="match status" value="1"/>
</dbReference>
<dbReference type="Gene3D" id="3.20.20.70">
    <property type="entry name" value="Aldolase class I"/>
    <property type="match status" value="1"/>
</dbReference>
<dbReference type="HAMAP" id="MF_01013">
    <property type="entry name" value="HisF"/>
    <property type="match status" value="1"/>
</dbReference>
<dbReference type="InterPro" id="IPR013785">
    <property type="entry name" value="Aldolase_TIM"/>
</dbReference>
<dbReference type="InterPro" id="IPR006062">
    <property type="entry name" value="His_biosynth"/>
</dbReference>
<dbReference type="InterPro" id="IPR004651">
    <property type="entry name" value="HisF"/>
</dbReference>
<dbReference type="InterPro" id="IPR050064">
    <property type="entry name" value="IGPS_HisA/HisF"/>
</dbReference>
<dbReference type="InterPro" id="IPR011060">
    <property type="entry name" value="RibuloseP-bd_barrel"/>
</dbReference>
<dbReference type="NCBIfam" id="TIGR00735">
    <property type="entry name" value="hisF"/>
    <property type="match status" value="1"/>
</dbReference>
<dbReference type="PANTHER" id="PTHR21235:SF2">
    <property type="entry name" value="IMIDAZOLE GLYCEROL PHOSPHATE SYNTHASE HISHF"/>
    <property type="match status" value="1"/>
</dbReference>
<dbReference type="PANTHER" id="PTHR21235">
    <property type="entry name" value="IMIDAZOLE GLYCEROL PHOSPHATE SYNTHASE SUBUNIT HISF/H IGP SYNTHASE SUBUNIT HISF/H"/>
    <property type="match status" value="1"/>
</dbReference>
<dbReference type="Pfam" id="PF00977">
    <property type="entry name" value="His_biosynth"/>
    <property type="match status" value="1"/>
</dbReference>
<dbReference type="SUPFAM" id="SSF51366">
    <property type="entry name" value="Ribulose-phoshate binding barrel"/>
    <property type="match status" value="1"/>
</dbReference>
<evidence type="ECO:0000255" key="1">
    <source>
        <dbReference type="HAMAP-Rule" id="MF_01013"/>
    </source>
</evidence>
<reference key="1">
    <citation type="journal article" date="2004" name="Nature">
        <title>Genome sequence of Silicibacter pomeroyi reveals adaptations to the marine environment.</title>
        <authorList>
            <person name="Moran M.A."/>
            <person name="Buchan A."/>
            <person name="Gonzalez J.M."/>
            <person name="Heidelberg J.F."/>
            <person name="Whitman W.B."/>
            <person name="Kiene R.P."/>
            <person name="Henriksen J.R."/>
            <person name="King G.M."/>
            <person name="Belas R."/>
            <person name="Fuqua C."/>
            <person name="Brinkac L.M."/>
            <person name="Lewis M."/>
            <person name="Johri S."/>
            <person name="Weaver B."/>
            <person name="Pai G."/>
            <person name="Eisen J.A."/>
            <person name="Rahe E."/>
            <person name="Sheldon W.M."/>
            <person name="Ye W."/>
            <person name="Miller T.R."/>
            <person name="Carlton J."/>
            <person name="Rasko D.A."/>
            <person name="Paulsen I.T."/>
            <person name="Ren Q."/>
            <person name="Daugherty S.C."/>
            <person name="DeBoy R.T."/>
            <person name="Dodson R.J."/>
            <person name="Durkin A.S."/>
            <person name="Madupu R."/>
            <person name="Nelson W.C."/>
            <person name="Sullivan S.A."/>
            <person name="Rosovitz M.J."/>
            <person name="Haft D.H."/>
            <person name="Selengut J."/>
            <person name="Ward N."/>
        </authorList>
    </citation>
    <scope>NUCLEOTIDE SEQUENCE [LARGE SCALE GENOMIC DNA]</scope>
    <source>
        <strain>ATCC 700808 / DSM 15171 / DSS-3</strain>
    </source>
</reference>
<reference key="2">
    <citation type="journal article" date="2014" name="Stand. Genomic Sci.">
        <title>An updated genome annotation for the model marine bacterium Ruegeria pomeroyi DSS-3.</title>
        <authorList>
            <person name="Rivers A.R."/>
            <person name="Smith C.B."/>
            <person name="Moran M.A."/>
        </authorList>
    </citation>
    <scope>GENOME REANNOTATION</scope>
    <source>
        <strain>ATCC 700808 / DSM 15171 / DSS-3</strain>
    </source>
</reference>
<proteinExistence type="inferred from homology"/>
<keyword id="KW-0028">Amino-acid biosynthesis</keyword>
<keyword id="KW-0963">Cytoplasm</keyword>
<keyword id="KW-0368">Histidine biosynthesis</keyword>
<keyword id="KW-0456">Lyase</keyword>
<keyword id="KW-1185">Reference proteome</keyword>
<protein>
    <recommendedName>
        <fullName evidence="1">Imidazole glycerol phosphate synthase subunit HisF</fullName>
        <ecNumber evidence="1">4.3.2.10</ecNumber>
    </recommendedName>
    <alternativeName>
        <fullName evidence="1">IGP synthase cyclase subunit</fullName>
    </alternativeName>
    <alternativeName>
        <fullName evidence="1">IGP synthase subunit HisF</fullName>
    </alternativeName>
    <alternativeName>
        <fullName evidence="1">ImGP synthase subunit HisF</fullName>
        <shortName evidence="1">IGPS subunit HisF</shortName>
    </alternativeName>
</protein>